<evidence type="ECO:0000250" key="1"/>
<evidence type="ECO:0000255" key="2"/>
<evidence type="ECO:0000255" key="3">
    <source>
        <dbReference type="PROSITE-ProRule" id="PRU01240"/>
    </source>
</evidence>
<evidence type="ECO:0000256" key="4">
    <source>
        <dbReference type="SAM" id="MobiDB-lite"/>
    </source>
</evidence>
<evidence type="ECO:0000305" key="5"/>
<gene>
    <name type="primary">SUB1</name>
</gene>
<sequence>MGVFRFISISLAAVSAANAAQILSMPHAQTVPHSYIVMMKDDTSDDDFNHHQSWLQSTHTHNITRRATIQNAGMRHKYNFRKMKGYSGIFDEETIKDIAKDPKVMFVEPDTIISVNGKVEQSNVPSWGLARISNSQPGANSYVYDSSAGEGITVYSVDTGVDINHEDFEGRAIWGSNQVNDGDDRDGSGHGTHTSGTMVGKEFGIAKKAKLVAVKVLGNDGSGPTSGIVAGINWCVEHARQNGGNDKAVMNMSLGGSSSSALNRAAAQAVEQGMFLSVAAGNENQDARSSSPASEPSVCTVGSSAEDDSRSSFSNWGPALDLFAPGSNIISARPGGGSQSMSGTSMAAPHVAGLAAYLMALEGISGGAVCDRLKELGSSSITDVGPGTPTNVLISNGGAKGGNPKPAPGPSPNPSQPSEPQQPAPSQPGEPGESFPGEPFPGEPFPGEPFPGESSPGESAPAPAPMPPSPQHPHTPYPGGDNFDFDGYWKKYFGGEHWRKMFGSFWN</sequence>
<protein>
    <recommendedName>
        <fullName>Subtilisin-like protease 1</fullName>
        <ecNumber>3.4.21.-</ecNumber>
    </recommendedName>
</protein>
<organism>
    <name type="scientific">Trichophyton equinum</name>
    <name type="common">Horse ringworm fungus</name>
    <dbReference type="NCBI Taxonomy" id="63418"/>
    <lineage>
        <taxon>Eukaryota</taxon>
        <taxon>Fungi</taxon>
        <taxon>Dikarya</taxon>
        <taxon>Ascomycota</taxon>
        <taxon>Pezizomycotina</taxon>
        <taxon>Eurotiomycetes</taxon>
        <taxon>Eurotiomycetidae</taxon>
        <taxon>Onygenales</taxon>
        <taxon>Arthrodermataceae</taxon>
        <taxon>Trichophyton</taxon>
    </lineage>
</organism>
<dbReference type="EC" id="3.4.21.-"/>
<dbReference type="EMBL" id="FJ356722">
    <property type="protein sequence ID" value="ACJ04077.1"/>
    <property type="molecule type" value="Genomic_DNA"/>
</dbReference>
<dbReference type="SMR" id="B6VA84"/>
<dbReference type="MEROPS" id="S08.025"/>
<dbReference type="GlyCosmos" id="B6VA84">
    <property type="glycosylation" value="1 site, No reported glycans"/>
</dbReference>
<dbReference type="VEuPathDB" id="FungiDB:TEQG_01977"/>
<dbReference type="GO" id="GO:0005576">
    <property type="term" value="C:extracellular region"/>
    <property type="evidence" value="ECO:0007669"/>
    <property type="project" value="UniProtKB-SubCell"/>
</dbReference>
<dbReference type="GO" id="GO:0004252">
    <property type="term" value="F:serine-type endopeptidase activity"/>
    <property type="evidence" value="ECO:0007669"/>
    <property type="project" value="InterPro"/>
</dbReference>
<dbReference type="GO" id="GO:0006508">
    <property type="term" value="P:proteolysis"/>
    <property type="evidence" value="ECO:0007669"/>
    <property type="project" value="UniProtKB-KW"/>
</dbReference>
<dbReference type="CDD" id="cd04077">
    <property type="entry name" value="Peptidases_S8_PCSK9_ProteinaseK_like"/>
    <property type="match status" value="1"/>
</dbReference>
<dbReference type="FunFam" id="3.40.50.200:FF:000014">
    <property type="entry name" value="Proteinase K"/>
    <property type="match status" value="1"/>
</dbReference>
<dbReference type="Gene3D" id="3.30.70.80">
    <property type="entry name" value="Peptidase S8 propeptide/proteinase inhibitor I9"/>
    <property type="match status" value="1"/>
</dbReference>
<dbReference type="Gene3D" id="3.40.50.200">
    <property type="entry name" value="Peptidase S8/S53 domain"/>
    <property type="match status" value="1"/>
</dbReference>
<dbReference type="InterPro" id="IPR034193">
    <property type="entry name" value="PCSK9_ProteinaseK-like"/>
</dbReference>
<dbReference type="InterPro" id="IPR000209">
    <property type="entry name" value="Peptidase_S8/S53_dom"/>
</dbReference>
<dbReference type="InterPro" id="IPR036852">
    <property type="entry name" value="Peptidase_S8/S53_dom_sf"/>
</dbReference>
<dbReference type="InterPro" id="IPR023828">
    <property type="entry name" value="Peptidase_S8_Ser-AS"/>
</dbReference>
<dbReference type="InterPro" id="IPR050131">
    <property type="entry name" value="Peptidase_S8_subtilisin-like"/>
</dbReference>
<dbReference type="InterPro" id="IPR015500">
    <property type="entry name" value="Peptidase_S8_subtilisin-rel"/>
</dbReference>
<dbReference type="InterPro" id="IPR010259">
    <property type="entry name" value="S8pro/Inhibitor_I9"/>
</dbReference>
<dbReference type="InterPro" id="IPR037045">
    <property type="entry name" value="S8pro/Inhibitor_I9_sf"/>
</dbReference>
<dbReference type="PANTHER" id="PTHR43806:SF58">
    <property type="entry name" value="ALKALINE PROTEASE 1-RELATED"/>
    <property type="match status" value="1"/>
</dbReference>
<dbReference type="PANTHER" id="PTHR43806">
    <property type="entry name" value="PEPTIDASE S8"/>
    <property type="match status" value="1"/>
</dbReference>
<dbReference type="Pfam" id="PF05922">
    <property type="entry name" value="Inhibitor_I9"/>
    <property type="match status" value="1"/>
</dbReference>
<dbReference type="Pfam" id="PF00082">
    <property type="entry name" value="Peptidase_S8"/>
    <property type="match status" value="1"/>
</dbReference>
<dbReference type="PRINTS" id="PR00723">
    <property type="entry name" value="SUBTILISIN"/>
</dbReference>
<dbReference type="SUPFAM" id="SSF54897">
    <property type="entry name" value="Protease propeptides/inhibitors"/>
    <property type="match status" value="1"/>
</dbReference>
<dbReference type="SUPFAM" id="SSF52743">
    <property type="entry name" value="Subtilisin-like"/>
    <property type="match status" value="1"/>
</dbReference>
<dbReference type="PROSITE" id="PS51892">
    <property type="entry name" value="SUBTILASE"/>
    <property type="match status" value="1"/>
</dbReference>
<dbReference type="PROSITE" id="PS00138">
    <property type="entry name" value="SUBTILASE_SER"/>
    <property type="match status" value="1"/>
</dbReference>
<feature type="signal peptide" evidence="2">
    <location>
        <begin position="1"/>
        <end position="19"/>
    </location>
</feature>
<feature type="propeptide" id="PRO_0000380757" evidence="1">
    <location>
        <begin position="20"/>
        <end position="116"/>
    </location>
</feature>
<feature type="chain" id="PRO_0000380758" description="Subtilisin-like protease 1">
    <location>
        <begin position="117"/>
        <end position="507"/>
    </location>
</feature>
<feature type="domain" description="Inhibitor I9" evidence="2">
    <location>
        <begin position="34"/>
        <end position="113"/>
    </location>
</feature>
<feature type="domain" description="Peptidase S8" evidence="3">
    <location>
        <begin position="126"/>
        <end position="400"/>
    </location>
</feature>
<feature type="region of interest" description="Disordered" evidence="4">
    <location>
        <begin position="175"/>
        <end position="198"/>
    </location>
</feature>
<feature type="region of interest" description="Disordered" evidence="4">
    <location>
        <begin position="282"/>
        <end position="312"/>
    </location>
</feature>
<feature type="region of interest" description="Disordered" evidence="4">
    <location>
        <begin position="378"/>
        <end position="486"/>
    </location>
</feature>
<feature type="compositionally biased region" description="Polar residues" evidence="4">
    <location>
        <begin position="282"/>
        <end position="294"/>
    </location>
</feature>
<feature type="compositionally biased region" description="Polar residues" evidence="4">
    <location>
        <begin position="378"/>
        <end position="394"/>
    </location>
</feature>
<feature type="compositionally biased region" description="Pro residues" evidence="4">
    <location>
        <begin position="405"/>
        <end position="428"/>
    </location>
</feature>
<feature type="compositionally biased region" description="Pro residues" evidence="4">
    <location>
        <begin position="438"/>
        <end position="449"/>
    </location>
</feature>
<feature type="compositionally biased region" description="Low complexity" evidence="4">
    <location>
        <begin position="450"/>
        <end position="461"/>
    </location>
</feature>
<feature type="compositionally biased region" description="Pro residues" evidence="4">
    <location>
        <begin position="462"/>
        <end position="476"/>
    </location>
</feature>
<feature type="active site" description="Charge relay system" evidence="3">
    <location>
        <position position="158"/>
    </location>
</feature>
<feature type="active site" description="Charge relay system" evidence="3">
    <location>
        <position position="190"/>
    </location>
</feature>
<feature type="active site" description="Charge relay system" evidence="3">
    <location>
        <position position="345"/>
    </location>
</feature>
<feature type="glycosylation site" description="N-linked (GlcNAc...) asparagine" evidence="2">
    <location>
        <position position="251"/>
    </location>
</feature>
<proteinExistence type="inferred from homology"/>
<name>SUB1_TRIEQ</name>
<comment type="function">
    <text evidence="1">Secreted subtilisin-like serine protease with keratinolytic activity that contributes to pathogenicity.</text>
</comment>
<comment type="subcellular location">
    <subcellularLocation>
        <location evidence="1">Secreted</location>
    </subcellularLocation>
</comment>
<comment type="similarity">
    <text evidence="5">Belongs to the peptidase S8 family.</text>
</comment>
<accession>B6VA84</accession>
<reference key="1">
    <citation type="submission" date="2008-10" db="EMBL/GenBank/DDBJ databases">
        <title>Comparing putative pathogenicity factors between Trichophyton tonsurans and Trichophyton equinum.</title>
        <authorList>
            <person name="Preuett B.L."/>
            <person name="Abdel-Rahman S.M."/>
        </authorList>
    </citation>
    <scope>NUCLEOTIDE SEQUENCE [GENOMIC DNA]</scope>
</reference>
<keyword id="KW-0325">Glycoprotein</keyword>
<keyword id="KW-0378">Hydrolase</keyword>
<keyword id="KW-0645">Protease</keyword>
<keyword id="KW-0964">Secreted</keyword>
<keyword id="KW-0720">Serine protease</keyword>
<keyword id="KW-0732">Signal</keyword>
<keyword id="KW-0843">Virulence</keyword>
<keyword id="KW-0865">Zymogen</keyword>